<protein>
    <recommendedName>
        <fullName>RUN and FYVE domain-containing protein 4</fullName>
    </recommendedName>
</protein>
<proteinExistence type="evidence at protein level"/>
<sequence>MAEEGAILKVTKDLRAAVSAILQGYGDGQGPVTDTSAELHRLCGCLELLLQFDQKEQKSFLGPRKDYWDFLCTALRRQRGNMEPIHFVRSQDKLKTPLGKGRAFIRFCLARGQLAEALQLCLLNSELTREWYGPRSPLLCPERQEDILDSLYALNGVAFELDLQQPDLDGAWPMFSESRCSSSTQTQGRRPRKNKDAPKKIPAAYGGPENVQIEDSHTSQAICLQDAPSGQQLAGLPRSQQQRHLPFFLEKKGESSRKHRYPQSMWEPEGKELQLDQEERAPWIEIFLGNSTPSTQGQGKGAMGTQKEVIGMEAEVTGVLLVAEGQRTTEGTHKKEAEWSHVQRLLMPSPRGAVEGAVSGSRQGSGGSSILGEPWVLQGHATKEDSTVENPQVQTEVTLVARREEQAEVSLQDEIKSLRLGLRKAEEQAQRQEQLLREQEGELQALREQLSRCQEERAELQAQLEQKQQEAERRDAMYQEELGGQRDLVQAMKRRVLELIQEKDRLWQRLQHLSSMAPECCVACSKIFGRFSRRYPCRLCGGLLCHACSMDYKKRDRCCPPCAQGREAQVT</sequence>
<comment type="function">
    <text evidence="1 6 7">ARL8 effector that promotes the coupling of endolysosomes to dynein-dynactin for retrograde transport along microtubules. Acts by binding both GTP-bound ARL8 and dynein-dynactin. In nonneuronal cells, promotes concentration of endolysosomes in the juxtanuclear area. In hippocampal neurons, drives retrograde transport of endolysosomes from the axon to the soma (PubMed:35314674). Positive regulator of macroautophagy in dendritic cells. Increases autophagic flux, probably by stimulating both autophagosome formation and facilitating tethering with lysosomes. Binds to phosphatidylinositol 3-phosphate (PtdIns3P) through its FYVE-type zinc finger (PubMed:26416964). Positive regulator of osteosclast bone-resorbing activity, possibly by promoting late endosome-lysosome fusion by acting as an adapter protein between RAB7A on late endosomes and LAMP2 on primary lysosomes (By similarity).</text>
</comment>
<comment type="subunit">
    <text evidence="1 6 7">Forms homodimers (via coiled coil domain) (By similarity). Interacts with RAB7A (PubMed:26416964). Forms a ternary complex with RAB7A and LAMP2; the interaction with RAB7A is mediated by RUFY4 (via RUN and coiled coil domains) (By similarity). Interacts with GTP-, but not GDP-bound ARL8A and ARL8B (PubMed:35314674). Interacts with dynactin/DCTN1 and the dynein intermediate chain DYNC1I1/2 (PubMed:35314674).</text>
</comment>
<comment type="interaction">
    <interactant intactId="EBI-10181525">
        <id>Q6ZNE9</id>
    </interactant>
    <interactant intactId="EBI-745859">
        <id>P55273</id>
        <label>CDKN2D</label>
    </interactant>
    <organismsDiffer>false</organismsDiffer>
    <experiments>3</experiments>
</comment>
<comment type="interaction">
    <interactant intactId="EBI-10181525">
        <id>Q6ZNE9</id>
    </interactant>
    <interactant intactId="EBI-10976677">
        <id>G5E9A7</id>
        <label>DMWD</label>
    </interactant>
    <organismsDiffer>false</organismsDiffer>
    <experiments>3</experiments>
</comment>
<comment type="interaction">
    <interactant intactId="EBI-10181525">
        <id>Q6ZNE9</id>
    </interactant>
    <interactant intactId="EBI-744302">
        <id>P14136</id>
        <label>GFAP</label>
    </interactant>
    <organismsDiffer>false</organismsDiffer>
    <experiments>3</experiments>
</comment>
<comment type="interaction">
    <interactant intactId="EBI-10181525">
        <id>Q6ZNE9</id>
    </interactant>
    <interactant intactId="EBI-466029">
        <id>P42858</id>
        <label>HTT</label>
    </interactant>
    <organismsDiffer>false</organismsDiffer>
    <experiments>3</experiments>
</comment>
<comment type="interaction">
    <interactant intactId="EBI-10181525">
        <id>Q6ZNE9</id>
    </interactant>
    <interactant intactId="EBI-351935">
        <id>P02545</id>
        <label>LMNA</label>
    </interactant>
    <organismsDiffer>false</organismsDiffer>
    <experiments>3</experiments>
</comment>
<comment type="interaction">
    <interactant intactId="EBI-10181525">
        <id>Q6ZNE9</id>
    </interactant>
    <interactant intactId="EBI-739832">
        <id>Q8TBB1</id>
        <label>LNX1</label>
    </interactant>
    <organismsDiffer>false</organismsDiffer>
    <experiments>6</experiments>
</comment>
<comment type="interaction">
    <interactant intactId="EBI-10181525">
        <id>Q6ZNE9</id>
    </interactant>
    <interactant intactId="EBI-2603996">
        <id>Q9BXW4</id>
        <label>MAP1LC3C</label>
    </interactant>
    <organismsDiffer>false</organismsDiffer>
    <experiments>3</experiments>
</comment>
<comment type="interaction">
    <interactant intactId="EBI-10181525">
        <id>Q6ZNE9</id>
    </interactant>
    <interactant intactId="EBI-715849">
        <id>O14777</id>
        <label>NDC80</label>
    </interactant>
    <organismsDiffer>false</organismsDiffer>
    <experiments>8</experiments>
</comment>
<comment type="interaction">
    <interactant intactId="EBI-10181525">
        <id>Q6ZNE9</id>
    </interactant>
    <interactant intactId="EBI-1014472">
        <id>P35240</id>
        <label>NF2</label>
    </interactant>
    <organismsDiffer>false</organismsDiffer>
    <experiments>3</experiments>
</comment>
<comment type="interaction">
    <interactant intactId="EBI-10181525">
        <id>Q6ZNE9</id>
    </interactant>
    <interactant intactId="EBI-5235340">
        <id>Q7Z699</id>
        <label>SPRED1</label>
    </interactant>
    <organismsDiffer>false</organismsDiffer>
    <experiments>3</experiments>
</comment>
<comment type="interaction">
    <interactant intactId="EBI-10181525">
        <id>Q6ZNE9</id>
    </interactant>
    <interactant intactId="EBI-6160596">
        <id>Q96Q05</id>
        <label>TRAPPC9</label>
    </interactant>
    <organismsDiffer>false</organismsDiffer>
    <experiments>2</experiments>
</comment>
<comment type="interaction">
    <interactant intactId="EBI-10181525">
        <id>Q6ZNE9</id>
    </interactant>
    <interactant intactId="EBI-12806590">
        <id>Q86WV8</id>
        <label>TSC1</label>
    </interactant>
    <organismsDiffer>false</organismsDiffer>
    <experiments>3</experiments>
</comment>
<comment type="subcellular location">
    <subcellularLocation>
        <location evidence="6">Cytoplasmic vesicle</location>
        <location evidence="6">Autophagosome</location>
    </subcellularLocation>
    <subcellularLocation>
        <location evidence="7">Lysosome</location>
    </subcellularLocation>
    <text evidence="7">In the presence of ARL8, recruited to endolysosomes.</text>
</comment>
<comment type="alternative products">
    <event type="alternative splicing"/>
    <isoform>
        <id>Q6ZNE9-2</id>
        <name>1</name>
        <sequence type="displayed"/>
    </isoform>
    <isoform>
        <id>Q6ZNE9-3</id>
        <name>2</name>
        <sequence type="described" ref="VSP_035815 VSP_035816"/>
    </isoform>
</comment>
<comment type="induction">
    <text evidence="6">Up-regulated by IL4/interleukin-4 in monocyte-derived dendritic cells.</text>
</comment>
<comment type="domain">
    <text evidence="6">The RUN domain and the FYVE-type zinc finger are essential for its function in the positive regulation of macroautophagy.</text>
</comment>
<comment type="miscellaneous">
    <molecule>Isoform 2</molecule>
    <text evidence="9">May be produced at very low levels due to a premature stop codon in the mRNA, leading to nonsense-mediated mRNA decay.</text>
</comment>
<comment type="sequence caution" evidence="9">
    <conflict type="erroneous initiation">
        <sequence resource="EMBL-CDS" id="AAI13713"/>
    </conflict>
    <text>Truncated N-terminus.</text>
</comment>
<comment type="sequence caution" evidence="9">
    <conflict type="erroneous translation">
        <sequence resource="EMBL-CDS" id="BAC87417"/>
    </conflict>
    <text>Wrong choice of CDS.</text>
</comment>
<name>RUFY4_HUMAN</name>
<evidence type="ECO:0000250" key="1">
    <source>
        <dbReference type="UniProtKB" id="Q3TYX8"/>
    </source>
</evidence>
<evidence type="ECO:0000255" key="2"/>
<evidence type="ECO:0000255" key="3">
    <source>
        <dbReference type="PROSITE-ProRule" id="PRU00091"/>
    </source>
</evidence>
<evidence type="ECO:0000255" key="4">
    <source>
        <dbReference type="PROSITE-ProRule" id="PRU00178"/>
    </source>
</evidence>
<evidence type="ECO:0000256" key="5">
    <source>
        <dbReference type="SAM" id="MobiDB-lite"/>
    </source>
</evidence>
<evidence type="ECO:0000269" key="6">
    <source>
    </source>
</evidence>
<evidence type="ECO:0000269" key="7">
    <source>
    </source>
</evidence>
<evidence type="ECO:0000303" key="8">
    <source>
    </source>
</evidence>
<evidence type="ECO:0000305" key="9"/>
<organism>
    <name type="scientific">Homo sapiens</name>
    <name type="common">Human</name>
    <dbReference type="NCBI Taxonomy" id="9606"/>
    <lineage>
        <taxon>Eukaryota</taxon>
        <taxon>Metazoa</taxon>
        <taxon>Chordata</taxon>
        <taxon>Craniata</taxon>
        <taxon>Vertebrata</taxon>
        <taxon>Euteleostomi</taxon>
        <taxon>Mammalia</taxon>
        <taxon>Eutheria</taxon>
        <taxon>Euarchontoglires</taxon>
        <taxon>Primates</taxon>
        <taxon>Haplorrhini</taxon>
        <taxon>Catarrhini</taxon>
        <taxon>Hominidae</taxon>
        <taxon>Homo</taxon>
    </lineage>
</organism>
<reference key="1">
    <citation type="journal article" date="2004" name="Nat. Genet.">
        <title>Complete sequencing and characterization of 21,243 full-length human cDNAs.</title>
        <authorList>
            <person name="Ota T."/>
            <person name="Suzuki Y."/>
            <person name="Nishikawa T."/>
            <person name="Otsuki T."/>
            <person name="Sugiyama T."/>
            <person name="Irie R."/>
            <person name="Wakamatsu A."/>
            <person name="Hayashi K."/>
            <person name="Sato H."/>
            <person name="Nagai K."/>
            <person name="Kimura K."/>
            <person name="Makita H."/>
            <person name="Sekine M."/>
            <person name="Obayashi M."/>
            <person name="Nishi T."/>
            <person name="Shibahara T."/>
            <person name="Tanaka T."/>
            <person name="Ishii S."/>
            <person name="Yamamoto J."/>
            <person name="Saito K."/>
            <person name="Kawai Y."/>
            <person name="Isono Y."/>
            <person name="Nakamura Y."/>
            <person name="Nagahari K."/>
            <person name="Murakami K."/>
            <person name="Yasuda T."/>
            <person name="Iwayanagi T."/>
            <person name="Wagatsuma M."/>
            <person name="Shiratori A."/>
            <person name="Sudo H."/>
            <person name="Hosoiri T."/>
            <person name="Kaku Y."/>
            <person name="Kodaira H."/>
            <person name="Kondo H."/>
            <person name="Sugawara M."/>
            <person name="Takahashi M."/>
            <person name="Kanda K."/>
            <person name="Yokoi T."/>
            <person name="Furuya T."/>
            <person name="Kikkawa E."/>
            <person name="Omura Y."/>
            <person name="Abe K."/>
            <person name="Kamihara K."/>
            <person name="Katsuta N."/>
            <person name="Sato K."/>
            <person name="Tanikawa M."/>
            <person name="Yamazaki M."/>
            <person name="Ninomiya K."/>
            <person name="Ishibashi T."/>
            <person name="Yamashita H."/>
            <person name="Murakawa K."/>
            <person name="Fujimori K."/>
            <person name="Tanai H."/>
            <person name="Kimata M."/>
            <person name="Watanabe M."/>
            <person name="Hiraoka S."/>
            <person name="Chiba Y."/>
            <person name="Ishida S."/>
            <person name="Ono Y."/>
            <person name="Takiguchi S."/>
            <person name="Watanabe S."/>
            <person name="Yosida M."/>
            <person name="Hotuta T."/>
            <person name="Kusano J."/>
            <person name="Kanehori K."/>
            <person name="Takahashi-Fujii A."/>
            <person name="Hara H."/>
            <person name="Tanase T.-O."/>
            <person name="Nomura Y."/>
            <person name="Togiya S."/>
            <person name="Komai F."/>
            <person name="Hara R."/>
            <person name="Takeuchi K."/>
            <person name="Arita M."/>
            <person name="Imose N."/>
            <person name="Musashino K."/>
            <person name="Yuuki H."/>
            <person name="Oshima A."/>
            <person name="Sasaki N."/>
            <person name="Aotsuka S."/>
            <person name="Yoshikawa Y."/>
            <person name="Matsunawa H."/>
            <person name="Ichihara T."/>
            <person name="Shiohata N."/>
            <person name="Sano S."/>
            <person name="Moriya S."/>
            <person name="Momiyama H."/>
            <person name="Satoh N."/>
            <person name="Takami S."/>
            <person name="Terashima Y."/>
            <person name="Suzuki O."/>
            <person name="Nakagawa S."/>
            <person name="Senoh A."/>
            <person name="Mizoguchi H."/>
            <person name="Goto Y."/>
            <person name="Shimizu F."/>
            <person name="Wakebe H."/>
            <person name="Hishigaki H."/>
            <person name="Watanabe T."/>
            <person name="Sugiyama A."/>
            <person name="Takemoto M."/>
            <person name="Kawakami B."/>
            <person name="Yamazaki M."/>
            <person name="Watanabe K."/>
            <person name="Kumagai A."/>
            <person name="Itakura S."/>
            <person name="Fukuzumi Y."/>
            <person name="Fujimori Y."/>
            <person name="Komiyama M."/>
            <person name="Tashiro H."/>
            <person name="Tanigami A."/>
            <person name="Fujiwara T."/>
            <person name="Ono T."/>
            <person name="Yamada K."/>
            <person name="Fujii Y."/>
            <person name="Ozaki K."/>
            <person name="Hirao M."/>
            <person name="Ohmori Y."/>
            <person name="Kawabata A."/>
            <person name="Hikiji T."/>
            <person name="Kobatake N."/>
            <person name="Inagaki H."/>
            <person name="Ikema Y."/>
            <person name="Okamoto S."/>
            <person name="Okitani R."/>
            <person name="Kawakami T."/>
            <person name="Noguchi S."/>
            <person name="Itoh T."/>
            <person name="Shigeta K."/>
            <person name="Senba T."/>
            <person name="Matsumura K."/>
            <person name="Nakajima Y."/>
            <person name="Mizuno T."/>
            <person name="Morinaga M."/>
            <person name="Sasaki M."/>
            <person name="Togashi T."/>
            <person name="Oyama M."/>
            <person name="Hata H."/>
            <person name="Watanabe M."/>
            <person name="Komatsu T."/>
            <person name="Mizushima-Sugano J."/>
            <person name="Satoh T."/>
            <person name="Shirai Y."/>
            <person name="Takahashi Y."/>
            <person name="Nakagawa K."/>
            <person name="Okumura K."/>
            <person name="Nagase T."/>
            <person name="Nomura N."/>
            <person name="Kikuchi H."/>
            <person name="Masuho Y."/>
            <person name="Yamashita R."/>
            <person name="Nakai K."/>
            <person name="Yada T."/>
            <person name="Nakamura Y."/>
            <person name="Ohara O."/>
            <person name="Isogai T."/>
            <person name="Sugano S."/>
        </authorList>
    </citation>
    <scope>NUCLEOTIDE SEQUENCE [LARGE SCALE MRNA] (ISOFORM 2)</scope>
    <source>
        <tissue>Thymus</tissue>
    </source>
</reference>
<reference key="2">
    <citation type="journal article" date="2005" name="Nature">
        <title>Generation and annotation of the DNA sequences of human chromosomes 2 and 4.</title>
        <authorList>
            <person name="Hillier L.W."/>
            <person name="Graves T.A."/>
            <person name="Fulton R.S."/>
            <person name="Fulton L.A."/>
            <person name="Pepin K.H."/>
            <person name="Minx P."/>
            <person name="Wagner-McPherson C."/>
            <person name="Layman D."/>
            <person name="Wylie K."/>
            <person name="Sekhon M."/>
            <person name="Becker M.C."/>
            <person name="Fewell G.A."/>
            <person name="Delehaunty K.D."/>
            <person name="Miner T.L."/>
            <person name="Nash W.E."/>
            <person name="Kremitzki C."/>
            <person name="Oddy L."/>
            <person name="Du H."/>
            <person name="Sun H."/>
            <person name="Bradshaw-Cordum H."/>
            <person name="Ali J."/>
            <person name="Carter J."/>
            <person name="Cordes M."/>
            <person name="Harris A."/>
            <person name="Isak A."/>
            <person name="van Brunt A."/>
            <person name="Nguyen C."/>
            <person name="Du F."/>
            <person name="Courtney L."/>
            <person name="Kalicki J."/>
            <person name="Ozersky P."/>
            <person name="Abbott S."/>
            <person name="Armstrong J."/>
            <person name="Belter E.A."/>
            <person name="Caruso L."/>
            <person name="Cedroni M."/>
            <person name="Cotton M."/>
            <person name="Davidson T."/>
            <person name="Desai A."/>
            <person name="Elliott G."/>
            <person name="Erb T."/>
            <person name="Fronick C."/>
            <person name="Gaige T."/>
            <person name="Haakenson W."/>
            <person name="Haglund K."/>
            <person name="Holmes A."/>
            <person name="Harkins R."/>
            <person name="Kim K."/>
            <person name="Kruchowski S.S."/>
            <person name="Strong C.M."/>
            <person name="Grewal N."/>
            <person name="Goyea E."/>
            <person name="Hou S."/>
            <person name="Levy A."/>
            <person name="Martinka S."/>
            <person name="Mead K."/>
            <person name="McLellan M.D."/>
            <person name="Meyer R."/>
            <person name="Randall-Maher J."/>
            <person name="Tomlinson C."/>
            <person name="Dauphin-Kohlberg S."/>
            <person name="Kozlowicz-Reilly A."/>
            <person name="Shah N."/>
            <person name="Swearengen-Shahid S."/>
            <person name="Snider J."/>
            <person name="Strong J.T."/>
            <person name="Thompson J."/>
            <person name="Yoakum M."/>
            <person name="Leonard S."/>
            <person name="Pearman C."/>
            <person name="Trani L."/>
            <person name="Radionenko M."/>
            <person name="Waligorski J.E."/>
            <person name="Wang C."/>
            <person name="Rock S.M."/>
            <person name="Tin-Wollam A.-M."/>
            <person name="Maupin R."/>
            <person name="Latreille P."/>
            <person name="Wendl M.C."/>
            <person name="Yang S.-P."/>
            <person name="Pohl C."/>
            <person name="Wallis J.W."/>
            <person name="Spieth J."/>
            <person name="Bieri T.A."/>
            <person name="Berkowicz N."/>
            <person name="Nelson J.O."/>
            <person name="Osborne J."/>
            <person name="Ding L."/>
            <person name="Meyer R."/>
            <person name="Sabo A."/>
            <person name="Shotland Y."/>
            <person name="Sinha P."/>
            <person name="Wohldmann P.E."/>
            <person name="Cook L.L."/>
            <person name="Hickenbotham M.T."/>
            <person name="Eldred J."/>
            <person name="Williams D."/>
            <person name="Jones T.A."/>
            <person name="She X."/>
            <person name="Ciccarelli F.D."/>
            <person name="Izaurralde E."/>
            <person name="Taylor J."/>
            <person name="Schmutz J."/>
            <person name="Myers R.M."/>
            <person name="Cox D.R."/>
            <person name="Huang X."/>
            <person name="McPherson J.D."/>
            <person name="Mardis E.R."/>
            <person name="Clifton S.W."/>
            <person name="Warren W.C."/>
            <person name="Chinwalla A.T."/>
            <person name="Eddy S.R."/>
            <person name="Marra M.A."/>
            <person name="Ovcharenko I."/>
            <person name="Furey T.S."/>
            <person name="Miller W."/>
            <person name="Eichler E.E."/>
            <person name="Bork P."/>
            <person name="Suyama M."/>
            <person name="Torrents D."/>
            <person name="Waterston R.H."/>
            <person name="Wilson R.K."/>
        </authorList>
    </citation>
    <scope>NUCLEOTIDE SEQUENCE [LARGE SCALE GENOMIC DNA]</scope>
</reference>
<reference key="3">
    <citation type="journal article" date="2004" name="Genome Res.">
        <title>The status, quality, and expansion of the NIH full-length cDNA project: the Mammalian Gene Collection (MGC).</title>
        <authorList>
            <consortium name="The MGC Project Team"/>
        </authorList>
    </citation>
    <scope>NUCLEOTIDE SEQUENCE [LARGE SCALE MRNA] OF 155-571 (ISOFORM 1)</scope>
</reference>
<reference key="4">
    <citation type="journal article" date="2015" name="J. Cell Biol.">
        <title>RUN and FYVE domain-containing protein 4 enhances autophagy and lysosome tethering in response to Interleukin-4.</title>
        <authorList>
            <person name="Terawaki S."/>
            <person name="Camosseto V."/>
            <person name="Prete F."/>
            <person name="Wenger T."/>
            <person name="Papadopoulos A."/>
            <person name="Rondeau C."/>
            <person name="Combes A."/>
            <person name="Rodriguez Rodrigues C."/>
            <person name="Vu Manh T.P."/>
            <person name="Fallet M."/>
            <person name="English L."/>
            <person name="Santamaria R."/>
            <person name="Soares A.R."/>
            <person name="Weil T."/>
            <person name="Hammad H."/>
            <person name="Desjardins M."/>
            <person name="Gorvel J.P."/>
            <person name="Santos M.A."/>
            <person name="Gatti E."/>
            <person name="Pierre P."/>
        </authorList>
    </citation>
    <scope>FUNCTION</scope>
    <scope>INDUCTION</scope>
    <scope>DOMAINS FYVE AND RUN</scope>
    <scope>INTERACTION WITH RAB7A</scope>
    <scope>SUBCELLULAR LOCATION</scope>
</reference>
<reference key="5">
    <citation type="journal article" date="2022" name="Nat. Commun.">
        <title>RUFY3 and RUFY4 are ARL8 effectors that promote coupling of endolysosomes to dynein-dynactin.</title>
        <authorList>
            <person name="Keren-Kaplan T."/>
            <person name="Saric A."/>
            <person name="Ghosh S."/>
            <person name="Williamson C.D."/>
            <person name="Jia R."/>
            <person name="Li Y."/>
            <person name="Bonifacino J.S."/>
        </authorList>
    </citation>
    <scope>FUNCTION</scope>
    <scope>INTERACTION WITH ARL8A; ARL8B; DCTN1 AND DYNEIN INTERMEDIATE CHAIN</scope>
    <scope>SUBCELLULAR LOCATION</scope>
</reference>
<feature type="chain" id="PRO_0000284671" description="RUN and FYVE domain-containing protein 4">
    <location>
        <begin position="1"/>
        <end position="571"/>
    </location>
</feature>
<feature type="domain" description="RUN" evidence="4">
    <location>
        <begin position="33"/>
        <end position="166"/>
    </location>
</feature>
<feature type="zinc finger region" description="FYVE-type" evidence="3">
    <location>
        <begin position="474"/>
        <end position="567"/>
    </location>
</feature>
<feature type="region of interest" description="Disordered" evidence="5">
    <location>
        <begin position="174"/>
        <end position="207"/>
    </location>
</feature>
<feature type="coiled-coil region" evidence="2">
    <location>
        <begin position="408"/>
        <end position="481"/>
    </location>
</feature>
<feature type="compositionally biased region" description="Polar residues" evidence="5">
    <location>
        <begin position="178"/>
        <end position="188"/>
    </location>
</feature>
<feature type="binding site" evidence="3">
    <location>
        <position position="521"/>
    </location>
    <ligand>
        <name>Zn(2+)</name>
        <dbReference type="ChEBI" id="CHEBI:29105"/>
        <label>1</label>
    </ligand>
</feature>
<feature type="binding site" evidence="3">
    <location>
        <position position="524"/>
    </location>
    <ligand>
        <name>Zn(2+)</name>
        <dbReference type="ChEBI" id="CHEBI:29105"/>
        <label>1</label>
    </ligand>
</feature>
<feature type="binding site" evidence="3">
    <location>
        <position position="537"/>
    </location>
    <ligand>
        <name>Zn(2+)</name>
        <dbReference type="ChEBI" id="CHEBI:29105"/>
        <label>2</label>
    </ligand>
</feature>
<feature type="binding site" evidence="3">
    <location>
        <position position="540"/>
    </location>
    <ligand>
        <name>Zn(2+)</name>
        <dbReference type="ChEBI" id="CHEBI:29105"/>
        <label>2</label>
    </ligand>
</feature>
<feature type="binding site" evidence="3">
    <location>
        <position position="545"/>
    </location>
    <ligand>
        <name>Zn(2+)</name>
        <dbReference type="ChEBI" id="CHEBI:29105"/>
        <label>1</label>
    </ligand>
</feature>
<feature type="binding site" evidence="3">
    <location>
        <position position="548"/>
    </location>
    <ligand>
        <name>Zn(2+)</name>
        <dbReference type="ChEBI" id="CHEBI:29105"/>
        <label>1</label>
    </ligand>
</feature>
<feature type="binding site" evidence="3">
    <location>
        <position position="559"/>
    </location>
    <ligand>
        <name>Zn(2+)</name>
        <dbReference type="ChEBI" id="CHEBI:29105"/>
        <label>2</label>
    </ligand>
</feature>
<feature type="binding site" evidence="3">
    <location>
        <position position="562"/>
    </location>
    <ligand>
        <name>Zn(2+)</name>
        <dbReference type="ChEBI" id="CHEBI:29105"/>
        <label>2</label>
    </ligand>
</feature>
<feature type="splice variant" id="VSP_035815" description="In isoform 2." evidence="8">
    <original>LKTPLGKGRAFIRFCLARGQLAEALQLCLLNSELTREWYGPRSPLLCPERQEDILDSLYALNGVAFELDLQQPDLDGAW</original>
    <variation>GMVWTPEPSALPRTPRRHPGLSLCSQWGGLRVGPPAARPGWSLAHVLRVTLLQFHPNPGKETQKKQRCPKEDPSRIWRA</variation>
    <location>
        <begin position="94"/>
        <end position="172"/>
    </location>
</feature>
<feature type="splice variant" id="VSP_035816" description="In isoform 2." evidence="8">
    <location>
        <begin position="173"/>
        <end position="571"/>
    </location>
</feature>
<dbReference type="EMBL" id="AK128393">
    <property type="protein sequence ID" value="BAC87417.1"/>
    <property type="status" value="ALT_SEQ"/>
    <property type="molecule type" value="mRNA"/>
</dbReference>
<dbReference type="EMBL" id="AC124768">
    <property type="status" value="NOT_ANNOTATED_CDS"/>
    <property type="molecule type" value="Genomic_DNA"/>
</dbReference>
<dbReference type="EMBL" id="BC113712">
    <property type="protein sequence ID" value="AAI13713.1"/>
    <property type="status" value="ALT_INIT"/>
    <property type="molecule type" value="mRNA"/>
</dbReference>
<dbReference type="RefSeq" id="NP_940885.2">
    <molecule id="Q6ZNE9-2"/>
    <property type="nucleotide sequence ID" value="NM_198483.4"/>
</dbReference>
<dbReference type="RefSeq" id="XP_011509316.1">
    <property type="nucleotide sequence ID" value="XM_011511014.2"/>
</dbReference>
<dbReference type="RefSeq" id="XP_016859385.1">
    <property type="nucleotide sequence ID" value="XM_017003896.1"/>
</dbReference>
<dbReference type="RefSeq" id="XP_054197495.1">
    <molecule id="Q6ZNE9-2"/>
    <property type="nucleotide sequence ID" value="XM_054341520.1"/>
</dbReference>
<dbReference type="SMR" id="Q6ZNE9"/>
<dbReference type="BioGRID" id="130035">
    <property type="interactions" value="15"/>
</dbReference>
<dbReference type="FunCoup" id="Q6ZNE9">
    <property type="interactions" value="56"/>
</dbReference>
<dbReference type="IntAct" id="Q6ZNE9">
    <property type="interactions" value="21"/>
</dbReference>
<dbReference type="STRING" id="9606.ENSP00000363270"/>
<dbReference type="iPTMnet" id="Q6ZNE9"/>
<dbReference type="PhosphoSitePlus" id="Q6ZNE9"/>
<dbReference type="BioMuta" id="RUFY4"/>
<dbReference type="DMDM" id="215273875"/>
<dbReference type="jPOST" id="Q6ZNE9"/>
<dbReference type="MassIVE" id="Q6ZNE9"/>
<dbReference type="PaxDb" id="9606-ENSP00000363270"/>
<dbReference type="PeptideAtlas" id="Q6ZNE9"/>
<dbReference type="ProteomicsDB" id="68018">
    <molecule id="Q6ZNE9-2"/>
</dbReference>
<dbReference type="ProteomicsDB" id="68019">
    <molecule id="Q6ZNE9-3"/>
</dbReference>
<dbReference type="Antibodypedia" id="34256">
    <property type="antibodies" value="53 antibodies from 17 providers"/>
</dbReference>
<dbReference type="DNASU" id="285180"/>
<dbReference type="Ensembl" id="ENST00000344321.8">
    <molecule id="Q6ZNE9-2"/>
    <property type="protein sequence ID" value="ENSP00000345900.7"/>
    <property type="gene ID" value="ENSG00000188282.13"/>
</dbReference>
<dbReference type="Ensembl" id="ENST00000457754.6">
    <molecule id="Q6ZNE9-3"/>
    <property type="protein sequence ID" value="ENSP00000410091.2"/>
    <property type="gene ID" value="ENSG00000188282.13"/>
</dbReference>
<dbReference type="Ensembl" id="ENST00000697321.1">
    <molecule id="Q6ZNE9-2"/>
    <property type="protein sequence ID" value="ENSP00000513250.1"/>
    <property type="gene ID" value="ENSG00000188282.13"/>
</dbReference>
<dbReference type="GeneID" id="285180"/>
<dbReference type="KEGG" id="hsa:285180"/>
<dbReference type="MANE-Select" id="ENST00000697321.1">
    <property type="protein sequence ID" value="ENSP00000513250.1"/>
    <property type="RefSeq nucleotide sequence ID" value="NM_198483.4"/>
    <property type="RefSeq protein sequence ID" value="NP_940885.2"/>
</dbReference>
<dbReference type="UCSC" id="uc061shp.1">
    <molecule id="Q6ZNE9-2"/>
    <property type="organism name" value="human"/>
</dbReference>
<dbReference type="AGR" id="HGNC:24804"/>
<dbReference type="CTD" id="285180"/>
<dbReference type="DisGeNET" id="285180"/>
<dbReference type="GeneCards" id="RUFY4"/>
<dbReference type="HGNC" id="HGNC:24804">
    <property type="gene designation" value="RUFY4"/>
</dbReference>
<dbReference type="HPA" id="ENSG00000188282">
    <property type="expression patterns" value="Tissue enhanced (brain, lymphoid tissue)"/>
</dbReference>
<dbReference type="MIM" id="620994">
    <property type="type" value="gene"/>
</dbReference>
<dbReference type="neXtProt" id="NX_Q6ZNE9"/>
<dbReference type="OpenTargets" id="ENSG00000188282"/>
<dbReference type="PharmGKB" id="PA147357421"/>
<dbReference type="VEuPathDB" id="HostDB:ENSG00000188282"/>
<dbReference type="eggNOG" id="KOG1729">
    <property type="taxonomic scope" value="Eukaryota"/>
</dbReference>
<dbReference type="GeneTree" id="ENSGT00940000154044"/>
<dbReference type="HOGENOM" id="CLU_1562395_0_0_1"/>
<dbReference type="InParanoid" id="Q6ZNE9"/>
<dbReference type="OMA" id="APGCCVG"/>
<dbReference type="OrthoDB" id="9044749at2759"/>
<dbReference type="PAN-GO" id="Q6ZNE9">
    <property type="GO annotations" value="4 GO annotations based on evolutionary models"/>
</dbReference>
<dbReference type="PhylomeDB" id="Q6ZNE9"/>
<dbReference type="PathwayCommons" id="Q6ZNE9"/>
<dbReference type="SignaLink" id="Q6ZNE9"/>
<dbReference type="BioGRID-ORCS" id="285180">
    <property type="hits" value="1 hit in 275 CRISPR screens"/>
</dbReference>
<dbReference type="GenomeRNAi" id="285180"/>
<dbReference type="Pharos" id="Q6ZNE9">
    <property type="development level" value="Tbio"/>
</dbReference>
<dbReference type="PRO" id="PR:Q6ZNE9"/>
<dbReference type="Proteomes" id="UP000005640">
    <property type="component" value="Chromosome 2"/>
</dbReference>
<dbReference type="RNAct" id="Q6ZNE9">
    <property type="molecule type" value="protein"/>
</dbReference>
<dbReference type="Bgee" id="ENSG00000188282">
    <property type="expression patterns" value="Expressed in male germ line stem cell (sensu Vertebrata) in testis and 89 other cell types or tissues"/>
</dbReference>
<dbReference type="ExpressionAtlas" id="Q6ZNE9">
    <property type="expression patterns" value="baseline and differential"/>
</dbReference>
<dbReference type="GO" id="GO:0005776">
    <property type="term" value="C:autophagosome"/>
    <property type="evidence" value="ECO:0000314"/>
    <property type="project" value="UniProtKB"/>
</dbReference>
<dbReference type="GO" id="GO:0036019">
    <property type="term" value="C:endolysosome"/>
    <property type="evidence" value="ECO:0000314"/>
    <property type="project" value="UniProtKB"/>
</dbReference>
<dbReference type="GO" id="GO:0034452">
    <property type="term" value="F:dynactin binding"/>
    <property type="evidence" value="ECO:0000314"/>
    <property type="project" value="UniProtKB"/>
</dbReference>
<dbReference type="GO" id="GO:0032266">
    <property type="term" value="F:phosphatidylinositol-3-phosphate binding"/>
    <property type="evidence" value="ECO:0000314"/>
    <property type="project" value="UniProtKB"/>
</dbReference>
<dbReference type="GO" id="GO:0008270">
    <property type="term" value="F:zinc ion binding"/>
    <property type="evidence" value="ECO:0007669"/>
    <property type="project" value="UniProtKB-KW"/>
</dbReference>
<dbReference type="GO" id="GO:0000045">
    <property type="term" value="P:autophagosome assembly"/>
    <property type="evidence" value="ECO:0000314"/>
    <property type="project" value="UniProtKB"/>
</dbReference>
<dbReference type="GO" id="GO:0071353">
    <property type="term" value="P:cellular response to interleukin-4"/>
    <property type="evidence" value="ECO:0000314"/>
    <property type="project" value="UniProtKB"/>
</dbReference>
<dbReference type="GO" id="GO:0061763">
    <property type="term" value="P:multivesicular body-lysosome fusion"/>
    <property type="evidence" value="ECO:0000250"/>
    <property type="project" value="UniProtKB"/>
</dbReference>
<dbReference type="GO" id="GO:0045780">
    <property type="term" value="P:positive regulation of bone resorption"/>
    <property type="evidence" value="ECO:0000250"/>
    <property type="project" value="UniProtKB"/>
</dbReference>
<dbReference type="GO" id="GO:0045921">
    <property type="term" value="P:positive regulation of exocytosis"/>
    <property type="evidence" value="ECO:0000250"/>
    <property type="project" value="UniProtKB"/>
</dbReference>
<dbReference type="GO" id="GO:0016239">
    <property type="term" value="P:positive regulation of macroautophagy"/>
    <property type="evidence" value="ECO:0000315"/>
    <property type="project" value="UniProtKB"/>
</dbReference>
<dbReference type="GO" id="GO:2001019">
    <property type="term" value="P:positive regulation of retrograde axon cargo transport"/>
    <property type="evidence" value="ECO:0000314"/>
    <property type="project" value="UniProtKB"/>
</dbReference>
<dbReference type="CDD" id="cd15745">
    <property type="entry name" value="FYVE_RUFY4"/>
    <property type="match status" value="1"/>
</dbReference>
<dbReference type="FunFam" id="1.20.58.900:FF:000015">
    <property type="entry name" value="RUN and FYVE domain containing 4"/>
    <property type="match status" value="1"/>
</dbReference>
<dbReference type="Gene3D" id="1.20.58.900">
    <property type="match status" value="1"/>
</dbReference>
<dbReference type="Gene3D" id="3.30.40.10">
    <property type="entry name" value="Zinc/RING finger domain, C3HC4 (zinc finger)"/>
    <property type="match status" value="1"/>
</dbReference>
<dbReference type="InterPro" id="IPR042939">
    <property type="entry name" value="RUFY4"/>
</dbReference>
<dbReference type="InterPro" id="IPR004012">
    <property type="entry name" value="Run_dom"/>
</dbReference>
<dbReference type="InterPro" id="IPR037213">
    <property type="entry name" value="Run_dom_sf"/>
</dbReference>
<dbReference type="InterPro" id="IPR017455">
    <property type="entry name" value="Znf_FYVE-rel"/>
</dbReference>
<dbReference type="InterPro" id="IPR011011">
    <property type="entry name" value="Znf_FYVE_PHD"/>
</dbReference>
<dbReference type="InterPro" id="IPR013083">
    <property type="entry name" value="Znf_RING/FYVE/PHD"/>
</dbReference>
<dbReference type="PANTHER" id="PTHR47732">
    <property type="entry name" value="RUN AND FYVE DOMAIN-CONTAINING PROTEIN 4"/>
    <property type="match status" value="1"/>
</dbReference>
<dbReference type="PANTHER" id="PTHR47732:SF1">
    <property type="entry name" value="RUN AND FYVE DOMAIN-CONTAINING PROTEIN 4"/>
    <property type="match status" value="1"/>
</dbReference>
<dbReference type="Pfam" id="PF25366">
    <property type="entry name" value="RUFY4"/>
    <property type="match status" value="1"/>
</dbReference>
<dbReference type="Pfam" id="PF02759">
    <property type="entry name" value="RUN"/>
    <property type="match status" value="1"/>
</dbReference>
<dbReference type="SMART" id="SM00593">
    <property type="entry name" value="RUN"/>
    <property type="match status" value="1"/>
</dbReference>
<dbReference type="SUPFAM" id="SSF57903">
    <property type="entry name" value="FYVE/PHD zinc finger"/>
    <property type="match status" value="1"/>
</dbReference>
<dbReference type="SUPFAM" id="SSF140741">
    <property type="entry name" value="RUN domain-like"/>
    <property type="match status" value="1"/>
</dbReference>
<dbReference type="PROSITE" id="PS50826">
    <property type="entry name" value="RUN"/>
    <property type="match status" value="1"/>
</dbReference>
<dbReference type="PROSITE" id="PS50178">
    <property type="entry name" value="ZF_FYVE"/>
    <property type="match status" value="1"/>
</dbReference>
<keyword id="KW-0025">Alternative splicing</keyword>
<keyword id="KW-0072">Autophagy</keyword>
<keyword id="KW-0175">Coiled coil</keyword>
<keyword id="KW-0968">Cytoplasmic vesicle</keyword>
<keyword id="KW-0458">Lysosome</keyword>
<keyword id="KW-0479">Metal-binding</keyword>
<keyword id="KW-1267">Proteomics identification</keyword>
<keyword id="KW-1185">Reference proteome</keyword>
<keyword id="KW-0862">Zinc</keyword>
<keyword id="KW-0863">Zinc-finger</keyword>
<accession>Q6ZNE9</accession>
<accession>Q6ZR96</accession>
<gene>
    <name type="primary">RUFY4</name>
</gene>